<accession>Q831T0</accession>
<dbReference type="EC" id="2.7.1.39" evidence="1"/>
<dbReference type="EMBL" id="AE016830">
    <property type="protein sequence ID" value="AAO82138.1"/>
    <property type="molecule type" value="Genomic_DNA"/>
</dbReference>
<dbReference type="RefSeq" id="NP_816068.1">
    <property type="nucleotide sequence ID" value="NC_004668.1"/>
</dbReference>
<dbReference type="RefSeq" id="WP_002387081.1">
    <property type="nucleotide sequence ID" value="NZ_KE136528.1"/>
</dbReference>
<dbReference type="SMR" id="Q831T0"/>
<dbReference type="STRING" id="226185.EF_2420"/>
<dbReference type="EnsemblBacteria" id="AAO82138">
    <property type="protein sequence ID" value="AAO82138"/>
    <property type="gene ID" value="EF_2420"/>
</dbReference>
<dbReference type="KEGG" id="efa:EF2420"/>
<dbReference type="PATRIC" id="fig|226185.45.peg.1125"/>
<dbReference type="eggNOG" id="COG0083">
    <property type="taxonomic scope" value="Bacteria"/>
</dbReference>
<dbReference type="HOGENOM" id="CLU_041243_0_0_9"/>
<dbReference type="UniPathway" id="UPA00050">
    <property type="reaction ID" value="UER00064"/>
</dbReference>
<dbReference type="Proteomes" id="UP000001415">
    <property type="component" value="Chromosome"/>
</dbReference>
<dbReference type="GO" id="GO:0005737">
    <property type="term" value="C:cytoplasm"/>
    <property type="evidence" value="ECO:0007669"/>
    <property type="project" value="UniProtKB-SubCell"/>
</dbReference>
<dbReference type="GO" id="GO:0005524">
    <property type="term" value="F:ATP binding"/>
    <property type="evidence" value="ECO:0007669"/>
    <property type="project" value="UniProtKB-UniRule"/>
</dbReference>
<dbReference type="GO" id="GO:0004413">
    <property type="term" value="F:homoserine kinase activity"/>
    <property type="evidence" value="ECO:0007669"/>
    <property type="project" value="UniProtKB-UniRule"/>
</dbReference>
<dbReference type="GO" id="GO:0009088">
    <property type="term" value="P:threonine biosynthetic process"/>
    <property type="evidence" value="ECO:0007669"/>
    <property type="project" value="UniProtKB-UniRule"/>
</dbReference>
<dbReference type="Gene3D" id="3.30.230.10">
    <property type="match status" value="1"/>
</dbReference>
<dbReference type="Gene3D" id="3.30.70.890">
    <property type="entry name" value="GHMP kinase, C-terminal domain"/>
    <property type="match status" value="1"/>
</dbReference>
<dbReference type="HAMAP" id="MF_00384">
    <property type="entry name" value="Homoser_kinase"/>
    <property type="match status" value="1"/>
</dbReference>
<dbReference type="InterPro" id="IPR013750">
    <property type="entry name" value="GHMP_kinase_C_dom"/>
</dbReference>
<dbReference type="InterPro" id="IPR036554">
    <property type="entry name" value="GHMP_kinase_C_sf"/>
</dbReference>
<dbReference type="InterPro" id="IPR006204">
    <property type="entry name" value="GHMP_kinase_N_dom"/>
</dbReference>
<dbReference type="InterPro" id="IPR006203">
    <property type="entry name" value="GHMP_knse_ATP-bd_CS"/>
</dbReference>
<dbReference type="InterPro" id="IPR000870">
    <property type="entry name" value="Homoserine_kinase"/>
</dbReference>
<dbReference type="InterPro" id="IPR020568">
    <property type="entry name" value="Ribosomal_Su5_D2-typ_SF"/>
</dbReference>
<dbReference type="InterPro" id="IPR014721">
    <property type="entry name" value="Ribsml_uS5_D2-typ_fold_subgr"/>
</dbReference>
<dbReference type="NCBIfam" id="TIGR00191">
    <property type="entry name" value="thrB"/>
    <property type="match status" value="1"/>
</dbReference>
<dbReference type="PANTHER" id="PTHR20861:SF1">
    <property type="entry name" value="HOMOSERINE KINASE"/>
    <property type="match status" value="1"/>
</dbReference>
<dbReference type="PANTHER" id="PTHR20861">
    <property type="entry name" value="HOMOSERINE/4-DIPHOSPHOCYTIDYL-2-C-METHYL-D-ERYTHRITOL KINASE"/>
    <property type="match status" value="1"/>
</dbReference>
<dbReference type="Pfam" id="PF08544">
    <property type="entry name" value="GHMP_kinases_C"/>
    <property type="match status" value="1"/>
</dbReference>
<dbReference type="Pfam" id="PF00288">
    <property type="entry name" value="GHMP_kinases_N"/>
    <property type="match status" value="1"/>
</dbReference>
<dbReference type="PIRSF" id="PIRSF000676">
    <property type="entry name" value="Homoser_kin"/>
    <property type="match status" value="1"/>
</dbReference>
<dbReference type="PRINTS" id="PR00958">
    <property type="entry name" value="HOMSERKINASE"/>
</dbReference>
<dbReference type="SUPFAM" id="SSF55060">
    <property type="entry name" value="GHMP Kinase, C-terminal domain"/>
    <property type="match status" value="1"/>
</dbReference>
<dbReference type="SUPFAM" id="SSF54211">
    <property type="entry name" value="Ribosomal protein S5 domain 2-like"/>
    <property type="match status" value="1"/>
</dbReference>
<dbReference type="PROSITE" id="PS00627">
    <property type="entry name" value="GHMP_KINASES_ATP"/>
    <property type="match status" value="1"/>
</dbReference>
<name>KHSE_ENTFA</name>
<reference key="1">
    <citation type="journal article" date="2003" name="Science">
        <title>Role of mobile DNA in the evolution of vancomycin-resistant Enterococcus faecalis.</title>
        <authorList>
            <person name="Paulsen I.T."/>
            <person name="Banerjei L."/>
            <person name="Myers G.S.A."/>
            <person name="Nelson K.E."/>
            <person name="Seshadri R."/>
            <person name="Read T.D."/>
            <person name="Fouts D.E."/>
            <person name="Eisen J.A."/>
            <person name="Gill S.R."/>
            <person name="Heidelberg J.F."/>
            <person name="Tettelin H."/>
            <person name="Dodson R.J."/>
            <person name="Umayam L.A."/>
            <person name="Brinkac L.M."/>
            <person name="Beanan M.J."/>
            <person name="Daugherty S.C."/>
            <person name="DeBoy R.T."/>
            <person name="Durkin S.A."/>
            <person name="Kolonay J.F."/>
            <person name="Madupu R."/>
            <person name="Nelson W.C."/>
            <person name="Vamathevan J.J."/>
            <person name="Tran B."/>
            <person name="Upton J."/>
            <person name="Hansen T."/>
            <person name="Shetty J."/>
            <person name="Khouri H.M."/>
            <person name="Utterback T.R."/>
            <person name="Radune D."/>
            <person name="Ketchum K.A."/>
            <person name="Dougherty B.A."/>
            <person name="Fraser C.M."/>
        </authorList>
    </citation>
    <scope>NUCLEOTIDE SEQUENCE [LARGE SCALE GENOMIC DNA]</scope>
    <source>
        <strain>ATCC 700802 / V583</strain>
    </source>
</reference>
<organism>
    <name type="scientific">Enterococcus faecalis (strain ATCC 700802 / V583)</name>
    <dbReference type="NCBI Taxonomy" id="226185"/>
    <lineage>
        <taxon>Bacteria</taxon>
        <taxon>Bacillati</taxon>
        <taxon>Bacillota</taxon>
        <taxon>Bacilli</taxon>
        <taxon>Lactobacillales</taxon>
        <taxon>Enterococcaceae</taxon>
        <taxon>Enterococcus</taxon>
    </lineage>
</organism>
<proteinExistence type="inferred from homology"/>
<comment type="function">
    <text evidence="1">Catalyzes the ATP-dependent phosphorylation of L-homoserine to L-homoserine phosphate.</text>
</comment>
<comment type="catalytic activity">
    <reaction evidence="1">
        <text>L-homoserine + ATP = O-phospho-L-homoserine + ADP + H(+)</text>
        <dbReference type="Rhea" id="RHEA:13985"/>
        <dbReference type="ChEBI" id="CHEBI:15378"/>
        <dbReference type="ChEBI" id="CHEBI:30616"/>
        <dbReference type="ChEBI" id="CHEBI:57476"/>
        <dbReference type="ChEBI" id="CHEBI:57590"/>
        <dbReference type="ChEBI" id="CHEBI:456216"/>
        <dbReference type="EC" id="2.7.1.39"/>
    </reaction>
</comment>
<comment type="pathway">
    <text evidence="1">Amino-acid biosynthesis; L-threonine biosynthesis; L-threonine from L-aspartate: step 4/5.</text>
</comment>
<comment type="subcellular location">
    <subcellularLocation>
        <location evidence="1">Cytoplasm</location>
    </subcellularLocation>
</comment>
<comment type="similarity">
    <text evidence="1">Belongs to the GHMP kinase family. Homoserine kinase subfamily.</text>
</comment>
<keyword id="KW-0028">Amino-acid biosynthesis</keyword>
<keyword id="KW-0067">ATP-binding</keyword>
<keyword id="KW-0963">Cytoplasm</keyword>
<keyword id="KW-0418">Kinase</keyword>
<keyword id="KW-0547">Nucleotide-binding</keyword>
<keyword id="KW-1185">Reference proteome</keyword>
<keyword id="KW-0791">Threonine biosynthesis</keyword>
<keyword id="KW-0808">Transferase</keyword>
<sequence>MKIRVPATSANLGPGFDSCGIALSAYLTINVLGESEFWEIQHTLGEEISTNEENLLIQTALKIAPELTPKVIRMVSDIPLARGLGSSSSVIVAGIELANRLAHLNLSPKEKVRLATEMEGHPDNVAPAILGDFVVASHVENQVYHVKHHFPMCDVIAFIPEEPLFTEKSRAVLPEKLAYKEAVAASSIANVMIAAILNGDLPLAGKMMEQDKWHETYRRSLVPHLKEIRRLTQQKGAYGSFLSGAGPTVLILSPEERTNEIVQSLEKLSTKASIQIFNIDQEGVQVF</sequence>
<protein>
    <recommendedName>
        <fullName evidence="1">Homoserine kinase</fullName>
        <shortName evidence="1">HK</shortName>
        <shortName evidence="1">HSK</shortName>
        <ecNumber evidence="1">2.7.1.39</ecNumber>
    </recommendedName>
</protein>
<feature type="chain" id="PRO_0000156570" description="Homoserine kinase">
    <location>
        <begin position="1"/>
        <end position="287"/>
    </location>
</feature>
<feature type="binding site" evidence="1">
    <location>
        <begin position="79"/>
        <end position="89"/>
    </location>
    <ligand>
        <name>ATP</name>
        <dbReference type="ChEBI" id="CHEBI:30616"/>
    </ligand>
</feature>
<gene>
    <name evidence="1" type="primary">thrB</name>
    <name type="ordered locus">EF_2420</name>
</gene>
<evidence type="ECO:0000255" key="1">
    <source>
        <dbReference type="HAMAP-Rule" id="MF_00384"/>
    </source>
</evidence>